<gene>
    <name type="primary">pin4</name>
    <name type="ORF">AFUA_1G05450</name>
</gene>
<organism>
    <name type="scientific">Aspergillus fumigatus (strain ATCC MYA-4609 / CBS 101355 / FGSC A1100 / Af293)</name>
    <name type="common">Neosartorya fumigata</name>
    <dbReference type="NCBI Taxonomy" id="330879"/>
    <lineage>
        <taxon>Eukaryota</taxon>
        <taxon>Fungi</taxon>
        <taxon>Dikarya</taxon>
        <taxon>Ascomycota</taxon>
        <taxon>Pezizomycotina</taxon>
        <taxon>Eurotiomycetes</taxon>
        <taxon>Eurotiomycetidae</taxon>
        <taxon>Eurotiales</taxon>
        <taxon>Aspergillaceae</taxon>
        <taxon>Aspergillus</taxon>
        <taxon>Aspergillus subgen. Fumigati</taxon>
    </lineage>
</organism>
<feature type="chain" id="PRO_0000232932" description="Peptidyl-prolyl cis-trans isomerase pin4">
    <location>
        <begin position="1"/>
        <end position="129"/>
    </location>
</feature>
<feature type="domain" description="PpiC" evidence="2">
    <location>
        <begin position="35"/>
        <end position="127"/>
    </location>
</feature>
<feature type="region of interest" description="Disordered" evidence="3">
    <location>
        <begin position="1"/>
        <end position="34"/>
    </location>
</feature>
<feature type="compositionally biased region" description="Basic and acidic residues" evidence="3">
    <location>
        <begin position="9"/>
        <end position="26"/>
    </location>
</feature>
<comment type="function">
    <text evidence="1">PPIases accelerate the folding of proteins. It catalyzes the cis-trans isomerization of proline imidic peptide bonds in oligopeptides (By similarity).</text>
</comment>
<comment type="catalytic activity">
    <reaction>
        <text>[protein]-peptidylproline (omega=180) = [protein]-peptidylproline (omega=0)</text>
        <dbReference type="Rhea" id="RHEA:16237"/>
        <dbReference type="Rhea" id="RHEA-COMP:10747"/>
        <dbReference type="Rhea" id="RHEA-COMP:10748"/>
        <dbReference type="ChEBI" id="CHEBI:83833"/>
        <dbReference type="ChEBI" id="CHEBI:83834"/>
        <dbReference type="EC" id="5.2.1.8"/>
    </reaction>
</comment>
<comment type="similarity">
    <text evidence="4">Belongs to the PpiC/parvulin rotamase family. PIN4 subfamily.</text>
</comment>
<keyword id="KW-0413">Isomerase</keyword>
<keyword id="KW-1185">Reference proteome</keyword>
<keyword id="KW-0697">Rotamase</keyword>
<sequence>MAPKNNAKGGDKKGKGKDASEGDKGKGGGKGLKPATSINVRHILCEKFSKKEEALEKLRNGAKFDDVAREYSEDKARQGGSLGWKVRGSLNADFEKAAYELEPSTTANPKYVEVKTGFGYHIIMVEGRK</sequence>
<reference key="1">
    <citation type="journal article" date="2005" name="Nature">
        <title>Genomic sequence of the pathogenic and allergenic filamentous fungus Aspergillus fumigatus.</title>
        <authorList>
            <person name="Nierman W.C."/>
            <person name="Pain A."/>
            <person name="Anderson M.J."/>
            <person name="Wortman J.R."/>
            <person name="Kim H.S."/>
            <person name="Arroyo J."/>
            <person name="Berriman M."/>
            <person name="Abe K."/>
            <person name="Archer D.B."/>
            <person name="Bermejo C."/>
            <person name="Bennett J.W."/>
            <person name="Bowyer P."/>
            <person name="Chen D."/>
            <person name="Collins M."/>
            <person name="Coulsen R."/>
            <person name="Davies R."/>
            <person name="Dyer P.S."/>
            <person name="Farman M.L."/>
            <person name="Fedorova N."/>
            <person name="Fedorova N.D."/>
            <person name="Feldblyum T.V."/>
            <person name="Fischer R."/>
            <person name="Fosker N."/>
            <person name="Fraser A."/>
            <person name="Garcia J.L."/>
            <person name="Garcia M.J."/>
            <person name="Goble A."/>
            <person name="Goldman G.H."/>
            <person name="Gomi K."/>
            <person name="Griffith-Jones S."/>
            <person name="Gwilliam R."/>
            <person name="Haas B.J."/>
            <person name="Haas H."/>
            <person name="Harris D.E."/>
            <person name="Horiuchi H."/>
            <person name="Huang J."/>
            <person name="Humphray S."/>
            <person name="Jimenez J."/>
            <person name="Keller N."/>
            <person name="Khouri H."/>
            <person name="Kitamoto K."/>
            <person name="Kobayashi T."/>
            <person name="Konzack S."/>
            <person name="Kulkarni R."/>
            <person name="Kumagai T."/>
            <person name="Lafton A."/>
            <person name="Latge J.-P."/>
            <person name="Li W."/>
            <person name="Lord A."/>
            <person name="Lu C."/>
            <person name="Majoros W.H."/>
            <person name="May G.S."/>
            <person name="Miller B.L."/>
            <person name="Mohamoud Y."/>
            <person name="Molina M."/>
            <person name="Monod M."/>
            <person name="Mouyna I."/>
            <person name="Mulligan S."/>
            <person name="Murphy L.D."/>
            <person name="O'Neil S."/>
            <person name="Paulsen I."/>
            <person name="Penalva M.A."/>
            <person name="Pertea M."/>
            <person name="Price C."/>
            <person name="Pritchard B.L."/>
            <person name="Quail M.A."/>
            <person name="Rabbinowitsch E."/>
            <person name="Rawlins N."/>
            <person name="Rajandream M.A."/>
            <person name="Reichard U."/>
            <person name="Renauld H."/>
            <person name="Robson G.D."/>
            <person name="Rodriguez de Cordoba S."/>
            <person name="Rodriguez-Pena J.M."/>
            <person name="Ronning C.M."/>
            <person name="Rutter S."/>
            <person name="Salzberg S.L."/>
            <person name="Sanchez M."/>
            <person name="Sanchez-Ferrero J.C."/>
            <person name="Saunders D."/>
            <person name="Seeger K."/>
            <person name="Squares R."/>
            <person name="Squares S."/>
            <person name="Takeuchi M."/>
            <person name="Tekaia F."/>
            <person name="Turner G."/>
            <person name="Vazquez de Aldana C.R."/>
            <person name="Weidman J."/>
            <person name="White O."/>
            <person name="Woodward J.R."/>
            <person name="Yu J.-H."/>
            <person name="Fraser C.M."/>
            <person name="Galagan J.E."/>
            <person name="Asai K."/>
            <person name="Machida M."/>
            <person name="Hall N."/>
            <person name="Barrell B.G."/>
            <person name="Denning D.W."/>
        </authorList>
    </citation>
    <scope>NUCLEOTIDE SEQUENCE [LARGE SCALE GENOMIC DNA]</scope>
    <source>
        <strain>ATCC MYA-4609 / CBS 101355 / FGSC A1100 / Af293</strain>
    </source>
</reference>
<proteinExistence type="inferred from homology"/>
<accession>Q4WJM6</accession>
<dbReference type="EC" id="5.2.1.8"/>
<dbReference type="EMBL" id="AAHF01000007">
    <property type="protein sequence ID" value="EAL88256.1"/>
    <property type="molecule type" value="Genomic_DNA"/>
</dbReference>
<dbReference type="RefSeq" id="XP_750294.1">
    <property type="nucleotide sequence ID" value="XM_745201.1"/>
</dbReference>
<dbReference type="SMR" id="Q4WJM6"/>
<dbReference type="STRING" id="330879.Q4WJM6"/>
<dbReference type="EnsemblFungi" id="EAL88256">
    <property type="protein sequence ID" value="EAL88256"/>
    <property type="gene ID" value="AFUA_1G05450"/>
</dbReference>
<dbReference type="GeneID" id="3507550"/>
<dbReference type="KEGG" id="afm:AFUA_1G05450"/>
<dbReference type="VEuPathDB" id="FungiDB:Afu1g05450"/>
<dbReference type="eggNOG" id="KOG3258">
    <property type="taxonomic scope" value="Eukaryota"/>
</dbReference>
<dbReference type="HOGENOM" id="CLU_090028_2_0_1"/>
<dbReference type="InParanoid" id="Q4WJM6"/>
<dbReference type="OMA" id="NAINVRH"/>
<dbReference type="OrthoDB" id="1911748at2759"/>
<dbReference type="Proteomes" id="UP000002530">
    <property type="component" value="Chromosome 1"/>
</dbReference>
<dbReference type="GO" id="GO:0005634">
    <property type="term" value="C:nucleus"/>
    <property type="evidence" value="ECO:0000318"/>
    <property type="project" value="GO_Central"/>
</dbReference>
<dbReference type="GO" id="GO:0003677">
    <property type="term" value="F:DNA binding"/>
    <property type="evidence" value="ECO:0007669"/>
    <property type="project" value="InterPro"/>
</dbReference>
<dbReference type="GO" id="GO:0003755">
    <property type="term" value="F:peptidyl-prolyl cis-trans isomerase activity"/>
    <property type="evidence" value="ECO:0007669"/>
    <property type="project" value="UniProtKB-KW"/>
</dbReference>
<dbReference type="GO" id="GO:0006364">
    <property type="term" value="P:rRNA processing"/>
    <property type="evidence" value="ECO:0007669"/>
    <property type="project" value="InterPro"/>
</dbReference>
<dbReference type="Gene3D" id="3.10.50.40">
    <property type="match status" value="1"/>
</dbReference>
<dbReference type="InterPro" id="IPR043323">
    <property type="entry name" value="PIN4"/>
</dbReference>
<dbReference type="InterPro" id="IPR046357">
    <property type="entry name" value="PPIase_dom_sf"/>
</dbReference>
<dbReference type="InterPro" id="IPR000297">
    <property type="entry name" value="PPIase_PpiC"/>
</dbReference>
<dbReference type="PANTHER" id="PTHR45995">
    <property type="match status" value="1"/>
</dbReference>
<dbReference type="Pfam" id="PF13616">
    <property type="entry name" value="Rotamase_3"/>
    <property type="match status" value="1"/>
</dbReference>
<dbReference type="SUPFAM" id="SSF54534">
    <property type="entry name" value="FKBP-like"/>
    <property type="match status" value="1"/>
</dbReference>
<dbReference type="PROSITE" id="PS50198">
    <property type="entry name" value="PPIC_PPIASE_2"/>
    <property type="match status" value="1"/>
</dbReference>
<name>PIN4_ASPFU</name>
<evidence type="ECO:0000250" key="1"/>
<evidence type="ECO:0000255" key="2">
    <source>
        <dbReference type="PROSITE-ProRule" id="PRU00278"/>
    </source>
</evidence>
<evidence type="ECO:0000256" key="3">
    <source>
        <dbReference type="SAM" id="MobiDB-lite"/>
    </source>
</evidence>
<evidence type="ECO:0000305" key="4"/>
<protein>
    <recommendedName>
        <fullName>Peptidyl-prolyl cis-trans isomerase pin4</fullName>
        <shortName>PPIase pin4</shortName>
        <ecNumber>5.2.1.8</ecNumber>
    </recommendedName>
    <alternativeName>
        <fullName>Parvulin-14</fullName>
        <shortName>Par14</shortName>
    </alternativeName>
</protein>